<protein>
    <recommendedName>
        <fullName evidence="1">Beta-ketoacyl-[acyl-carrier-protein] synthase III</fullName>
        <shortName evidence="1">Beta-ketoacyl-ACP synthase III</shortName>
        <shortName evidence="1">KAS III</shortName>
        <ecNumber evidence="1">2.3.1.180</ecNumber>
    </recommendedName>
    <alternativeName>
        <fullName evidence="1">3-oxoacyl-[acyl-carrier-protein] synthase 3</fullName>
    </alternativeName>
    <alternativeName>
        <fullName evidence="1">3-oxoacyl-[acyl-carrier-protein] synthase III</fullName>
    </alternativeName>
</protein>
<keyword id="KW-0012">Acyltransferase</keyword>
<keyword id="KW-0963">Cytoplasm</keyword>
<keyword id="KW-0275">Fatty acid biosynthesis</keyword>
<keyword id="KW-0276">Fatty acid metabolism</keyword>
<keyword id="KW-0444">Lipid biosynthesis</keyword>
<keyword id="KW-0443">Lipid metabolism</keyword>
<keyword id="KW-0511">Multifunctional enzyme</keyword>
<keyword id="KW-0808">Transferase</keyword>
<proteinExistence type="inferred from homology"/>
<evidence type="ECO:0000255" key="1">
    <source>
        <dbReference type="HAMAP-Rule" id="MF_01815"/>
    </source>
</evidence>
<reference key="1">
    <citation type="journal article" date="2008" name="Genomics">
        <title>Characterization of ST-4821 complex, a unique Neisseria meningitidis clone.</title>
        <authorList>
            <person name="Peng J."/>
            <person name="Yang L."/>
            <person name="Yang F."/>
            <person name="Yang J."/>
            <person name="Yan Y."/>
            <person name="Nie H."/>
            <person name="Zhang X."/>
            <person name="Xiong Z."/>
            <person name="Jiang Y."/>
            <person name="Cheng F."/>
            <person name="Xu X."/>
            <person name="Chen S."/>
            <person name="Sun L."/>
            <person name="Li W."/>
            <person name="Shen Y."/>
            <person name="Shao Z."/>
            <person name="Liang X."/>
            <person name="Xu J."/>
            <person name="Jin Q."/>
        </authorList>
    </citation>
    <scope>NUCLEOTIDE SEQUENCE [LARGE SCALE GENOMIC DNA]</scope>
    <source>
        <strain>053442</strain>
    </source>
</reference>
<organism>
    <name type="scientific">Neisseria meningitidis serogroup C (strain 053442)</name>
    <dbReference type="NCBI Taxonomy" id="374833"/>
    <lineage>
        <taxon>Bacteria</taxon>
        <taxon>Pseudomonadati</taxon>
        <taxon>Pseudomonadota</taxon>
        <taxon>Betaproteobacteria</taxon>
        <taxon>Neisseriales</taxon>
        <taxon>Neisseriaceae</taxon>
        <taxon>Neisseria</taxon>
    </lineage>
</organism>
<dbReference type="EC" id="2.3.1.180" evidence="1"/>
<dbReference type="EMBL" id="CP000381">
    <property type="protein sequence ID" value="ABX72511.1"/>
    <property type="molecule type" value="Genomic_DNA"/>
</dbReference>
<dbReference type="RefSeq" id="WP_002218026.1">
    <property type="nucleotide sequence ID" value="NC_010120.1"/>
</dbReference>
<dbReference type="SMR" id="A9M142"/>
<dbReference type="KEGG" id="nmn:NMCC_0303"/>
<dbReference type="HOGENOM" id="CLU_039592_4_1_4"/>
<dbReference type="UniPathway" id="UPA00094"/>
<dbReference type="Proteomes" id="UP000001177">
    <property type="component" value="Chromosome"/>
</dbReference>
<dbReference type="GO" id="GO:0005737">
    <property type="term" value="C:cytoplasm"/>
    <property type="evidence" value="ECO:0007669"/>
    <property type="project" value="UniProtKB-SubCell"/>
</dbReference>
<dbReference type="GO" id="GO:0004315">
    <property type="term" value="F:3-oxoacyl-[acyl-carrier-protein] synthase activity"/>
    <property type="evidence" value="ECO:0007669"/>
    <property type="project" value="InterPro"/>
</dbReference>
<dbReference type="GO" id="GO:0033818">
    <property type="term" value="F:beta-ketoacyl-acyl-carrier-protein synthase III activity"/>
    <property type="evidence" value="ECO:0007669"/>
    <property type="project" value="UniProtKB-UniRule"/>
</dbReference>
<dbReference type="GO" id="GO:0006633">
    <property type="term" value="P:fatty acid biosynthetic process"/>
    <property type="evidence" value="ECO:0007669"/>
    <property type="project" value="UniProtKB-UniRule"/>
</dbReference>
<dbReference type="CDD" id="cd00830">
    <property type="entry name" value="KAS_III"/>
    <property type="match status" value="1"/>
</dbReference>
<dbReference type="FunFam" id="3.40.47.10:FF:000004">
    <property type="entry name" value="3-oxoacyl-[acyl-carrier-protein] synthase 3"/>
    <property type="match status" value="1"/>
</dbReference>
<dbReference type="Gene3D" id="3.40.47.10">
    <property type="match status" value="1"/>
</dbReference>
<dbReference type="HAMAP" id="MF_01815">
    <property type="entry name" value="FabH"/>
    <property type="match status" value="1"/>
</dbReference>
<dbReference type="InterPro" id="IPR013747">
    <property type="entry name" value="ACP_syn_III_C"/>
</dbReference>
<dbReference type="InterPro" id="IPR013751">
    <property type="entry name" value="ACP_syn_III_N"/>
</dbReference>
<dbReference type="InterPro" id="IPR004655">
    <property type="entry name" value="FabH"/>
</dbReference>
<dbReference type="InterPro" id="IPR016039">
    <property type="entry name" value="Thiolase-like"/>
</dbReference>
<dbReference type="NCBIfam" id="TIGR00747">
    <property type="entry name" value="fabH"/>
    <property type="match status" value="1"/>
</dbReference>
<dbReference type="NCBIfam" id="NF006829">
    <property type="entry name" value="PRK09352.1"/>
    <property type="match status" value="1"/>
</dbReference>
<dbReference type="PANTHER" id="PTHR43091">
    <property type="entry name" value="3-OXOACYL-[ACYL-CARRIER-PROTEIN] SYNTHASE"/>
    <property type="match status" value="1"/>
</dbReference>
<dbReference type="PANTHER" id="PTHR43091:SF1">
    <property type="entry name" value="BETA-KETOACYL-[ACYL-CARRIER-PROTEIN] SYNTHASE III, CHLOROPLASTIC"/>
    <property type="match status" value="1"/>
</dbReference>
<dbReference type="Pfam" id="PF08545">
    <property type="entry name" value="ACP_syn_III"/>
    <property type="match status" value="1"/>
</dbReference>
<dbReference type="Pfam" id="PF08541">
    <property type="entry name" value="ACP_syn_III_C"/>
    <property type="match status" value="1"/>
</dbReference>
<dbReference type="SUPFAM" id="SSF53901">
    <property type="entry name" value="Thiolase-like"/>
    <property type="match status" value="1"/>
</dbReference>
<comment type="function">
    <text evidence="1">Catalyzes the condensation reaction of fatty acid synthesis by the addition to an acyl acceptor of two carbons from malonyl-ACP. Catalyzes the first condensation reaction which initiates fatty acid synthesis and may therefore play a role in governing the total rate of fatty acid production. Possesses both acetoacetyl-ACP synthase and acetyl transacylase activities. Its substrate specificity determines the biosynthesis of branched-chain and/or straight-chain of fatty acids.</text>
</comment>
<comment type="catalytic activity">
    <reaction evidence="1">
        <text>malonyl-[ACP] + acetyl-CoA + H(+) = 3-oxobutanoyl-[ACP] + CO2 + CoA</text>
        <dbReference type="Rhea" id="RHEA:12080"/>
        <dbReference type="Rhea" id="RHEA-COMP:9623"/>
        <dbReference type="Rhea" id="RHEA-COMP:9625"/>
        <dbReference type="ChEBI" id="CHEBI:15378"/>
        <dbReference type="ChEBI" id="CHEBI:16526"/>
        <dbReference type="ChEBI" id="CHEBI:57287"/>
        <dbReference type="ChEBI" id="CHEBI:57288"/>
        <dbReference type="ChEBI" id="CHEBI:78449"/>
        <dbReference type="ChEBI" id="CHEBI:78450"/>
        <dbReference type="EC" id="2.3.1.180"/>
    </reaction>
</comment>
<comment type="pathway">
    <text evidence="1">Lipid metabolism; fatty acid biosynthesis.</text>
</comment>
<comment type="subunit">
    <text evidence="1">Homodimer.</text>
</comment>
<comment type="subcellular location">
    <subcellularLocation>
        <location evidence="1">Cytoplasm</location>
    </subcellularLocation>
</comment>
<comment type="domain">
    <text evidence="1">The last Arg residue of the ACP-binding site is essential for the weak association between ACP/AcpP and FabH.</text>
</comment>
<comment type="similarity">
    <text evidence="1">Belongs to the thiolase-like superfamily. FabH family.</text>
</comment>
<name>FABH_NEIM0</name>
<gene>
    <name evidence="1" type="primary">fabH</name>
    <name type="ordered locus">NMCC_0303</name>
</gene>
<sequence>MQYAKISGTGSYLPANRVSNDDLAQKVDTSDEWITARTGIKFRHIAAENEKTSDLAAEAARRALDAAGLDSGEIDLIIVATATPDMQFPSTATIVQQKLGITNGCPAFDVQAVCAGFMYALTTANAYIKSGMAKNALVIGAETFSRIVDWNDRTTCVLFGDGAGAVVLSAADKPGIIHSKLKADGNYLKLLNVPGQIACGKVSGSPYISMDGPGVFKFAVKMLSKIADDVIEEAGYTAAQIDWIVPHQANRRIIESTAKHLGLSMDKVVLTVQDHGNTSAASIPLALDTGIRSGQIKRGQNLLLEGIGGGFAWGAVLLQY</sequence>
<feature type="chain" id="PRO_1000088316" description="Beta-ketoacyl-[acyl-carrier-protein] synthase III">
    <location>
        <begin position="1"/>
        <end position="320"/>
    </location>
</feature>
<feature type="region of interest" description="ACP-binding" evidence="1">
    <location>
        <begin position="248"/>
        <end position="252"/>
    </location>
</feature>
<feature type="active site" evidence="1">
    <location>
        <position position="114"/>
    </location>
</feature>
<feature type="active site" evidence="1">
    <location>
        <position position="247"/>
    </location>
</feature>
<feature type="active site" evidence="1">
    <location>
        <position position="277"/>
    </location>
</feature>
<accession>A9M142</accession>